<accession>C1IBY3</accession>
<proteinExistence type="evidence at protein level"/>
<keyword id="KW-1217">Cell adhesion impairing toxin</keyword>
<keyword id="KW-0903">Direct protein sequencing</keyword>
<keyword id="KW-1199">Hemostasis impairing toxin</keyword>
<keyword id="KW-1201">Platelet aggregation inhibiting toxin</keyword>
<keyword id="KW-0964">Secreted</keyword>
<keyword id="KW-0732">Signal</keyword>
<keyword id="KW-0800">Toxin</keyword>
<comment type="function">
    <text evidence="2">Inhibits platelet aggregation induced by all agonists tested (ADP, arachidonic acid, the thromboxane A2 analog U46619, thrombin, and snake venom snaclecs (TMVA that activates platelet through GPIB, and stejnulxin that specifically acts through GPVI (GP6))) (PubMed:18087067). May act by competing with fibrinogen for binding to glycoprotein IIb/IIIa (ITGA2B/ITGB3) (PubMed:18087067).</text>
</comment>
<comment type="subcellular location">
    <subcellularLocation>
        <location evidence="2">Secreted</location>
    </subcellularLocation>
</comment>
<comment type="tissue specificity">
    <text evidence="5">Expressed in salivary glands.</text>
</comment>
<comment type="similarity">
    <text evidence="4">Belongs to the CRISP family.</text>
</comment>
<name>INH2_TABYA</name>
<feature type="signal peptide" evidence="1 5">
    <location>
        <begin position="1"/>
        <end position="23"/>
    </location>
</feature>
<feature type="chain" id="PRO_5002910541" description="Tabinhibitin 2" evidence="5">
    <location>
        <begin position="24"/>
        <end position="255"/>
    </location>
</feature>
<feature type="domain" description="SCP" evidence="1">
    <location>
        <begin position="67"/>
        <end position="211"/>
    </location>
</feature>
<feature type="short sequence motif" description="Cell attachment site" evidence="4">
    <location>
        <begin position="32"/>
        <end position="34"/>
    </location>
</feature>
<feature type="sequence conflict" description="In Ref. 1." evidence="4" ref="1">
    <location>
        <begin position="76"/>
        <end position="77"/>
    </location>
</feature>
<feature type="sequence conflict" description="In Ref. 1." evidence="4" ref="1">
    <original>L</original>
    <variation>LHV</variation>
    <location>
        <position position="154"/>
    </location>
</feature>
<dbReference type="EMBL" id="EU147253">
    <property type="protein sequence ID" value="ABX80071.1"/>
    <property type="molecule type" value="mRNA"/>
</dbReference>
<dbReference type="SMR" id="C1IBY3"/>
<dbReference type="GO" id="GO:0005576">
    <property type="term" value="C:extracellular region"/>
    <property type="evidence" value="ECO:0007669"/>
    <property type="project" value="UniProtKB-SubCell"/>
</dbReference>
<dbReference type="GO" id="GO:0090729">
    <property type="term" value="F:toxin activity"/>
    <property type="evidence" value="ECO:0007669"/>
    <property type="project" value="UniProtKB-KW"/>
</dbReference>
<dbReference type="CDD" id="cd05380">
    <property type="entry name" value="CAP_euk"/>
    <property type="match status" value="1"/>
</dbReference>
<dbReference type="Gene3D" id="3.40.33.10">
    <property type="entry name" value="CAP"/>
    <property type="match status" value="1"/>
</dbReference>
<dbReference type="InterPro" id="IPR014044">
    <property type="entry name" value="CAP_dom"/>
</dbReference>
<dbReference type="InterPro" id="IPR035940">
    <property type="entry name" value="CAP_sf"/>
</dbReference>
<dbReference type="InterPro" id="IPR034763">
    <property type="entry name" value="P14a_insect"/>
</dbReference>
<dbReference type="Pfam" id="PF00188">
    <property type="entry name" value="CAP"/>
    <property type="match status" value="1"/>
</dbReference>
<dbReference type="PIRSF" id="PIRSF038921">
    <property type="entry name" value="P14a"/>
    <property type="match status" value="1"/>
</dbReference>
<dbReference type="SUPFAM" id="SSF55797">
    <property type="entry name" value="PR-1-like"/>
    <property type="match status" value="1"/>
</dbReference>
<sequence>MISILVSRFLLAALVLQYATIDAVNYCNLPCRGDRFHVGCGESAFAQECGESPETLDLLKEHTDEILSKINDVRDHVAKGSWGLPMAARMKVVVWDEELARLATRHTKGCLAETHACRNTERFLFPGQLNFEYTDDKLPQTKELIDAAIKKGHLQKHNISREIIESYKDNGPDGDVEELALALSDRVTAVGCGLTTWQDGAKARALLTCNFSSQNIWERPVYKIGNSPGEKCIEKDETYKNLCSASEPIDSNESN</sequence>
<organism>
    <name type="scientific">Tabanus yao</name>
    <name type="common">Horsefly</name>
    <dbReference type="NCBI Taxonomy" id="485572"/>
    <lineage>
        <taxon>Eukaryota</taxon>
        <taxon>Metazoa</taxon>
        <taxon>Ecdysozoa</taxon>
        <taxon>Arthropoda</taxon>
        <taxon>Hexapoda</taxon>
        <taxon>Insecta</taxon>
        <taxon>Pterygota</taxon>
        <taxon>Neoptera</taxon>
        <taxon>Endopterygota</taxon>
        <taxon>Diptera</taxon>
        <taxon>Brachycera</taxon>
        <taxon>Tabanomorpha</taxon>
        <taxon>Tabanoidea</taxon>
        <taxon>Tabanidae</taxon>
        <taxon>Tabanus</taxon>
    </lineage>
</organism>
<protein>
    <recommendedName>
        <fullName evidence="3">Tabinhibitin 2</fullName>
    </recommendedName>
    <alternativeName>
        <fullName evidence="6">Macquaritin 2</fullName>
    </alternativeName>
</protein>
<evidence type="ECO:0000255" key="1"/>
<evidence type="ECO:0000269" key="2">
    <source>
    </source>
</evidence>
<evidence type="ECO:0000303" key="3">
    <source>
    </source>
</evidence>
<evidence type="ECO:0000305" key="4"/>
<evidence type="ECO:0000305" key="5">
    <source>
    </source>
</evidence>
<evidence type="ECO:0000312" key="6">
    <source>
        <dbReference type="EMBL" id="ABX80071.1"/>
    </source>
</evidence>
<reference evidence="6" key="1">
    <citation type="journal article" date="2008" name="Mol. Cell. Proteomics">
        <title>Toward an understanding of the molecular mechanism for successful blood feeding by coupling proteomics analysis with pharmacological testing of horsefly salivary glands.</title>
        <authorList>
            <person name="Xu X."/>
            <person name="Yang H."/>
            <person name="Ma D."/>
            <person name="Wu J."/>
            <person name="Wang Y."/>
            <person name="Song Y."/>
            <person name="Wang X."/>
            <person name="Lu Y."/>
            <person name="Yang J."/>
            <person name="Lai R."/>
        </authorList>
    </citation>
    <scope>NUCLEOTIDE SEQUENCE [MRNA]</scope>
    <scope>PROTEIN SEQUENCE OF 24-56; 108-133 AND 205-219</scope>
    <scope>FUNCTION</scope>
    <scope>SUBCELLULAR LOCATION</scope>
    <source>
        <tissue>Salivary gland</tissue>
    </source>
</reference>